<name>RR8_PLETE</name>
<geneLocation type="chloroplast"/>
<accession>A6YGD0</accession>
<evidence type="ECO:0000250" key="1"/>
<evidence type="ECO:0000305" key="2"/>
<organism>
    <name type="scientific">Pleurastrum terricola</name>
    <name type="common">Filamentous green alga</name>
    <name type="synonym">Leptosira terrestris</name>
    <dbReference type="NCBI Taxonomy" id="34116"/>
    <lineage>
        <taxon>Eukaryota</taxon>
        <taxon>Viridiplantae</taxon>
        <taxon>Chlorophyta</taxon>
        <taxon>core chlorophytes</taxon>
        <taxon>Chlorophyceae</taxon>
        <taxon>CS clade</taxon>
        <taxon>Chlamydomonadales</taxon>
        <taxon>Pleurastraceae</taxon>
        <taxon>Pleurastrum</taxon>
    </lineage>
</organism>
<dbReference type="EMBL" id="EF506945">
    <property type="protein sequence ID" value="ABO69343.1"/>
    <property type="molecule type" value="Genomic_DNA"/>
</dbReference>
<dbReference type="RefSeq" id="YP_001382207.1">
    <property type="nucleotide sequence ID" value="NC_009681.1"/>
</dbReference>
<dbReference type="SMR" id="A6YGD0"/>
<dbReference type="GeneID" id="5383826"/>
<dbReference type="GO" id="GO:0009507">
    <property type="term" value="C:chloroplast"/>
    <property type="evidence" value="ECO:0007669"/>
    <property type="project" value="UniProtKB-SubCell"/>
</dbReference>
<dbReference type="GO" id="GO:1990904">
    <property type="term" value="C:ribonucleoprotein complex"/>
    <property type="evidence" value="ECO:0007669"/>
    <property type="project" value="UniProtKB-KW"/>
</dbReference>
<dbReference type="GO" id="GO:0005840">
    <property type="term" value="C:ribosome"/>
    <property type="evidence" value="ECO:0007669"/>
    <property type="project" value="UniProtKB-KW"/>
</dbReference>
<dbReference type="GO" id="GO:0019843">
    <property type="term" value="F:rRNA binding"/>
    <property type="evidence" value="ECO:0007669"/>
    <property type="project" value="UniProtKB-UniRule"/>
</dbReference>
<dbReference type="GO" id="GO:0003735">
    <property type="term" value="F:structural constituent of ribosome"/>
    <property type="evidence" value="ECO:0007669"/>
    <property type="project" value="InterPro"/>
</dbReference>
<dbReference type="GO" id="GO:0006412">
    <property type="term" value="P:translation"/>
    <property type="evidence" value="ECO:0007669"/>
    <property type="project" value="UniProtKB-UniRule"/>
</dbReference>
<dbReference type="FunFam" id="3.30.1490.10:FF:000001">
    <property type="entry name" value="30S ribosomal protein S8"/>
    <property type="match status" value="1"/>
</dbReference>
<dbReference type="Gene3D" id="3.30.1370.30">
    <property type="match status" value="1"/>
</dbReference>
<dbReference type="Gene3D" id="3.30.1490.10">
    <property type="match status" value="1"/>
</dbReference>
<dbReference type="HAMAP" id="MF_01302_B">
    <property type="entry name" value="Ribosomal_uS8_B"/>
    <property type="match status" value="1"/>
</dbReference>
<dbReference type="InterPro" id="IPR000630">
    <property type="entry name" value="Ribosomal_uS8"/>
</dbReference>
<dbReference type="InterPro" id="IPR047863">
    <property type="entry name" value="Ribosomal_uS8_CS"/>
</dbReference>
<dbReference type="InterPro" id="IPR035987">
    <property type="entry name" value="Ribosomal_uS8_sf"/>
</dbReference>
<dbReference type="NCBIfam" id="NF001109">
    <property type="entry name" value="PRK00136.1"/>
    <property type="match status" value="1"/>
</dbReference>
<dbReference type="PANTHER" id="PTHR11758">
    <property type="entry name" value="40S RIBOSOMAL PROTEIN S15A"/>
    <property type="match status" value="1"/>
</dbReference>
<dbReference type="Pfam" id="PF00410">
    <property type="entry name" value="Ribosomal_S8"/>
    <property type="match status" value="1"/>
</dbReference>
<dbReference type="SUPFAM" id="SSF56047">
    <property type="entry name" value="Ribosomal protein S8"/>
    <property type="match status" value="1"/>
</dbReference>
<dbReference type="PROSITE" id="PS00053">
    <property type="entry name" value="RIBOSOMAL_S8"/>
    <property type="match status" value="1"/>
</dbReference>
<keyword id="KW-0150">Chloroplast</keyword>
<keyword id="KW-0934">Plastid</keyword>
<keyword id="KW-0687">Ribonucleoprotein</keyword>
<keyword id="KW-0689">Ribosomal protein</keyword>
<keyword id="KW-0694">RNA-binding</keyword>
<keyword id="KW-0699">rRNA-binding</keyword>
<feature type="chain" id="PRO_0000305780" description="Small ribosomal subunit protein uS8c">
    <location>
        <begin position="1"/>
        <end position="141"/>
    </location>
</feature>
<gene>
    <name type="primary">rps8</name>
</gene>
<protein>
    <recommendedName>
        <fullName evidence="2">Small ribosomal subunit protein uS8c</fullName>
    </recommendedName>
    <alternativeName>
        <fullName>30S ribosomal protein S8, chloroplastic</fullName>
    </alternativeName>
</protein>
<sequence>MVNDTISDMLTRIRNANMAKNDLVLIPFTHINLEICQILLKEGFIQSFKTLTLDVSKYSKLNAQKNLNIVVKLKYLGRQKNSCITNLLRISKPGNRIYAKHKIPDMLGGLGIIIVSTSAGIMTDREAREQKIGGELLCSVW</sequence>
<reference key="1">
    <citation type="journal article" date="2007" name="BMC Genomics">
        <title>The chloroplast genome sequence of the green alga Leptosira terrestris: multiple losses of the inverted repeat and extensive genome rearrangements within the Trebouxiophyceae.</title>
        <authorList>
            <person name="de Cambiaire J.-C."/>
            <person name="Otis C."/>
            <person name="Turmel M."/>
            <person name="Lemieux C."/>
        </authorList>
    </citation>
    <scope>NUCLEOTIDE SEQUENCE [LARGE SCALE GENOMIC DNA]</scope>
    <source>
        <strain>CCAP 463/2 / UTEX 333</strain>
    </source>
</reference>
<comment type="function">
    <text evidence="1">One of the primary rRNA binding proteins, it binds directly to 16S rRNA central domain where it helps coordinate assembly of the platform of the 30S subunit.</text>
</comment>
<comment type="subunit">
    <text evidence="1">Part of the 30S ribosomal subunit.</text>
</comment>
<comment type="subcellular location">
    <subcellularLocation>
        <location>Plastid</location>
        <location>Chloroplast</location>
    </subcellularLocation>
</comment>
<comment type="similarity">
    <text evidence="2">Belongs to the universal ribosomal protein uS8 family.</text>
</comment>
<proteinExistence type="inferred from homology"/>